<evidence type="ECO:0000255" key="1">
    <source>
        <dbReference type="HAMAP-Rule" id="MF_03141"/>
    </source>
</evidence>
<evidence type="ECO:0000256" key="2">
    <source>
        <dbReference type="SAM" id="MobiDB-lite"/>
    </source>
</evidence>
<dbReference type="EMBL" id="CR382128">
    <property type="protein sequence ID" value="CAG82578.1"/>
    <property type="molecule type" value="Genomic_DNA"/>
</dbReference>
<dbReference type="RefSeq" id="XP_500364.1">
    <property type="nucleotide sequence ID" value="XM_500364.1"/>
</dbReference>
<dbReference type="SMR" id="Q6CG48"/>
<dbReference type="FunCoup" id="Q6CG48">
    <property type="interactions" value="57"/>
</dbReference>
<dbReference type="STRING" id="284591.Q6CG48"/>
<dbReference type="EnsemblFungi" id="CAG82578">
    <property type="protein sequence ID" value="CAG82578"/>
    <property type="gene ID" value="YALI0_B00902g"/>
</dbReference>
<dbReference type="KEGG" id="yli:2906884"/>
<dbReference type="VEuPathDB" id="FungiDB:YALI0_B00902g"/>
<dbReference type="HOGENOM" id="CLU_000288_57_15_1"/>
<dbReference type="InParanoid" id="Q6CG48"/>
<dbReference type="OMA" id="WHVATKE"/>
<dbReference type="OrthoDB" id="98785at4891"/>
<dbReference type="Proteomes" id="UP000001300">
    <property type="component" value="Chromosome B"/>
</dbReference>
<dbReference type="GO" id="GO:0005881">
    <property type="term" value="C:cytoplasmic microtubule"/>
    <property type="evidence" value="ECO:0000318"/>
    <property type="project" value="GO_Central"/>
</dbReference>
<dbReference type="GO" id="GO:0000776">
    <property type="term" value="C:kinetochore"/>
    <property type="evidence" value="ECO:0000318"/>
    <property type="project" value="GO_Central"/>
</dbReference>
<dbReference type="GO" id="GO:0005875">
    <property type="term" value="C:microtubule associated complex"/>
    <property type="evidence" value="ECO:0000318"/>
    <property type="project" value="GO_Central"/>
</dbReference>
<dbReference type="GO" id="GO:0005635">
    <property type="term" value="C:nuclear envelope"/>
    <property type="evidence" value="ECO:0000318"/>
    <property type="project" value="GO_Central"/>
</dbReference>
<dbReference type="GO" id="GO:0000922">
    <property type="term" value="C:spindle pole"/>
    <property type="evidence" value="ECO:0007669"/>
    <property type="project" value="UniProtKB-SubCell"/>
</dbReference>
<dbReference type="GO" id="GO:0070840">
    <property type="term" value="F:dynein complex binding"/>
    <property type="evidence" value="ECO:0000318"/>
    <property type="project" value="GO_Central"/>
</dbReference>
<dbReference type="GO" id="GO:0051010">
    <property type="term" value="F:microtubule plus-end binding"/>
    <property type="evidence" value="ECO:0000318"/>
    <property type="project" value="GO_Central"/>
</dbReference>
<dbReference type="GO" id="GO:0051301">
    <property type="term" value="P:cell division"/>
    <property type="evidence" value="ECO:0007669"/>
    <property type="project" value="UniProtKB-KW"/>
</dbReference>
<dbReference type="GO" id="GO:0000132">
    <property type="term" value="P:establishment of mitotic spindle orientation"/>
    <property type="evidence" value="ECO:0000318"/>
    <property type="project" value="GO_Central"/>
</dbReference>
<dbReference type="GO" id="GO:0031023">
    <property type="term" value="P:microtubule organizing center organization"/>
    <property type="evidence" value="ECO:0000318"/>
    <property type="project" value="GO_Central"/>
</dbReference>
<dbReference type="GO" id="GO:0051012">
    <property type="term" value="P:microtubule sliding"/>
    <property type="evidence" value="ECO:0007669"/>
    <property type="project" value="UniProtKB-UniRule"/>
</dbReference>
<dbReference type="GO" id="GO:0007097">
    <property type="term" value="P:nuclear migration"/>
    <property type="evidence" value="ECO:0000318"/>
    <property type="project" value="GO_Central"/>
</dbReference>
<dbReference type="GO" id="GO:0047496">
    <property type="term" value="P:vesicle transport along microtubule"/>
    <property type="evidence" value="ECO:0000318"/>
    <property type="project" value="GO_Central"/>
</dbReference>
<dbReference type="CDD" id="cd00200">
    <property type="entry name" value="WD40"/>
    <property type="match status" value="1"/>
</dbReference>
<dbReference type="FunFam" id="2.130.10.10:FF:001547">
    <property type="entry name" value="Nuclear distribution protein PAC1"/>
    <property type="match status" value="1"/>
</dbReference>
<dbReference type="Gene3D" id="1.20.960.30">
    <property type="match status" value="1"/>
</dbReference>
<dbReference type="Gene3D" id="2.130.10.10">
    <property type="entry name" value="YVTN repeat-like/Quinoprotein amine dehydrogenase"/>
    <property type="match status" value="1"/>
</dbReference>
<dbReference type="HAMAP" id="MF_03141">
    <property type="entry name" value="lis1"/>
    <property type="match status" value="1"/>
</dbReference>
<dbReference type="InterPro" id="IPR017252">
    <property type="entry name" value="Dynein_regulator_LIS1"/>
</dbReference>
<dbReference type="InterPro" id="IPR020472">
    <property type="entry name" value="G-protein_beta_WD-40_rep"/>
</dbReference>
<dbReference type="InterPro" id="IPR037190">
    <property type="entry name" value="LIS1_N"/>
</dbReference>
<dbReference type="InterPro" id="IPR015943">
    <property type="entry name" value="WD40/YVTN_repeat-like_dom_sf"/>
</dbReference>
<dbReference type="InterPro" id="IPR036322">
    <property type="entry name" value="WD40_repeat_dom_sf"/>
</dbReference>
<dbReference type="InterPro" id="IPR001680">
    <property type="entry name" value="WD40_rpt"/>
</dbReference>
<dbReference type="InterPro" id="IPR050349">
    <property type="entry name" value="WD_LIS1/nudF_dynein_reg"/>
</dbReference>
<dbReference type="PANTHER" id="PTHR44129">
    <property type="entry name" value="WD REPEAT-CONTAINING PROTEIN POP1"/>
    <property type="match status" value="1"/>
</dbReference>
<dbReference type="Pfam" id="PF00400">
    <property type="entry name" value="WD40"/>
    <property type="match status" value="7"/>
</dbReference>
<dbReference type="PIRSF" id="PIRSF037647">
    <property type="entry name" value="Dynein_regulator_Lis1"/>
    <property type="match status" value="1"/>
</dbReference>
<dbReference type="PRINTS" id="PR00320">
    <property type="entry name" value="GPROTEINBRPT"/>
</dbReference>
<dbReference type="SMART" id="SM00320">
    <property type="entry name" value="WD40"/>
    <property type="match status" value="7"/>
</dbReference>
<dbReference type="SUPFAM" id="SSF109925">
    <property type="entry name" value="Lissencephaly-1 protein (Lis-1, PAF-AH alpha) N-terminal domain"/>
    <property type="match status" value="1"/>
</dbReference>
<dbReference type="SUPFAM" id="SSF50978">
    <property type="entry name" value="WD40 repeat-like"/>
    <property type="match status" value="1"/>
</dbReference>
<dbReference type="PROSITE" id="PS50082">
    <property type="entry name" value="WD_REPEATS_2"/>
    <property type="match status" value="5"/>
</dbReference>
<dbReference type="PROSITE" id="PS50294">
    <property type="entry name" value="WD_REPEATS_REGION"/>
    <property type="match status" value="1"/>
</dbReference>
<accession>Q6CG48</accession>
<feature type="chain" id="PRO_0000240430" description="Nuclear distribution protein PAC1">
    <location>
        <begin position="1"/>
        <end position="437"/>
    </location>
</feature>
<feature type="repeat" description="WD 1">
    <location>
        <begin position="114"/>
        <end position="153"/>
    </location>
</feature>
<feature type="repeat" description="WD 2">
    <location>
        <begin position="156"/>
        <end position="217"/>
    </location>
</feature>
<feature type="repeat" description="WD 3">
    <location>
        <begin position="221"/>
        <end position="260"/>
    </location>
</feature>
<feature type="repeat" description="WD 4">
    <location>
        <begin position="263"/>
        <end position="301"/>
    </location>
</feature>
<feature type="repeat" description="WD 5">
    <location>
        <begin position="304"/>
        <end position="356"/>
    </location>
</feature>
<feature type="repeat" description="WD 6">
    <location>
        <begin position="358"/>
        <end position="397"/>
    </location>
</feature>
<feature type="repeat" description="WD 7">
    <location>
        <begin position="401"/>
        <end position="437"/>
    </location>
</feature>
<feature type="region of interest" description="Disordered" evidence="2">
    <location>
        <begin position="165"/>
        <end position="186"/>
    </location>
</feature>
<feature type="coiled-coil region" evidence="1">
    <location>
        <begin position="64"/>
        <end position="94"/>
    </location>
</feature>
<feature type="compositionally biased region" description="Basic and acidic residues" evidence="2">
    <location>
        <begin position="173"/>
        <end position="186"/>
    </location>
</feature>
<proteinExistence type="inferred from homology"/>
<gene>
    <name evidence="1" type="primary">PAC1</name>
    <name evidence="1" type="synonym">LIS1</name>
    <name type="ordered locus">YALI0B00902g</name>
</gene>
<name>LIS1_YARLI</name>
<reference key="1">
    <citation type="journal article" date="2004" name="Nature">
        <title>Genome evolution in yeasts.</title>
        <authorList>
            <person name="Dujon B."/>
            <person name="Sherman D."/>
            <person name="Fischer G."/>
            <person name="Durrens P."/>
            <person name="Casaregola S."/>
            <person name="Lafontaine I."/>
            <person name="de Montigny J."/>
            <person name="Marck C."/>
            <person name="Neuveglise C."/>
            <person name="Talla E."/>
            <person name="Goffard N."/>
            <person name="Frangeul L."/>
            <person name="Aigle M."/>
            <person name="Anthouard V."/>
            <person name="Babour A."/>
            <person name="Barbe V."/>
            <person name="Barnay S."/>
            <person name="Blanchin S."/>
            <person name="Beckerich J.-M."/>
            <person name="Beyne E."/>
            <person name="Bleykasten C."/>
            <person name="Boisrame A."/>
            <person name="Boyer J."/>
            <person name="Cattolico L."/>
            <person name="Confanioleri F."/>
            <person name="de Daruvar A."/>
            <person name="Despons L."/>
            <person name="Fabre E."/>
            <person name="Fairhead C."/>
            <person name="Ferry-Dumazet H."/>
            <person name="Groppi A."/>
            <person name="Hantraye F."/>
            <person name="Hennequin C."/>
            <person name="Jauniaux N."/>
            <person name="Joyet P."/>
            <person name="Kachouri R."/>
            <person name="Kerrest A."/>
            <person name="Koszul R."/>
            <person name="Lemaire M."/>
            <person name="Lesur I."/>
            <person name="Ma L."/>
            <person name="Muller H."/>
            <person name="Nicaud J.-M."/>
            <person name="Nikolski M."/>
            <person name="Oztas S."/>
            <person name="Ozier-Kalogeropoulos O."/>
            <person name="Pellenz S."/>
            <person name="Potier S."/>
            <person name="Richard G.-F."/>
            <person name="Straub M.-L."/>
            <person name="Suleau A."/>
            <person name="Swennen D."/>
            <person name="Tekaia F."/>
            <person name="Wesolowski-Louvel M."/>
            <person name="Westhof E."/>
            <person name="Wirth B."/>
            <person name="Zeniou-Meyer M."/>
            <person name="Zivanovic Y."/>
            <person name="Bolotin-Fukuhara M."/>
            <person name="Thierry A."/>
            <person name="Bouchier C."/>
            <person name="Caudron B."/>
            <person name="Scarpelli C."/>
            <person name="Gaillardin C."/>
            <person name="Weissenbach J."/>
            <person name="Wincker P."/>
            <person name="Souciet J.-L."/>
        </authorList>
    </citation>
    <scope>NUCLEOTIDE SEQUENCE [LARGE SCALE GENOMIC DNA]</scope>
    <source>
        <strain>CLIB 122 / E 150</strain>
    </source>
</reference>
<organism>
    <name type="scientific">Yarrowia lipolytica (strain CLIB 122 / E 150)</name>
    <name type="common">Yeast</name>
    <name type="synonym">Candida lipolytica</name>
    <dbReference type="NCBI Taxonomy" id="284591"/>
    <lineage>
        <taxon>Eukaryota</taxon>
        <taxon>Fungi</taxon>
        <taxon>Dikarya</taxon>
        <taxon>Ascomycota</taxon>
        <taxon>Saccharomycotina</taxon>
        <taxon>Dipodascomycetes</taxon>
        <taxon>Dipodascales</taxon>
        <taxon>Dipodascales incertae sedis</taxon>
        <taxon>Yarrowia</taxon>
    </lineage>
</organism>
<protein>
    <recommendedName>
        <fullName evidence="1">Nuclear distribution protein PAC1</fullName>
    </recommendedName>
    <alternativeName>
        <fullName evidence="1">Lissencephaly-1 homolog</fullName>
        <shortName evidence="1">LIS-1</shortName>
    </alternativeName>
    <alternativeName>
        <fullName evidence="1">nudF homolog</fullName>
    </alternativeName>
</protein>
<sequence length="437" mass="48180">MESLLTDKQRSDLETSIFGYVSRLTNDEALLSQLAAVLSQPSGSEPVPADTLKANALLLEKKWLSVIRLQRKVMDLETRLEAAEREASSTHKANGLGAGDPKTWLPKTSRFSLLHKQPVNAVSFHPFHSTLASACEDGNIRIWDYELGEIETTIKAHTRGVLDVDFSQPDTGASRDKSHDKPRADVSHAQPRALLVSCSSDLTIRIWDPQNEYANVKTLTGHDHTISAVKFTASGNHVISASRDKTVRVWSVQSGYCVRTVHGHTDWVKSCAALNEEFIFSAGIDHVTRVSEFVSGDGKMTLLGHEHVIEGVAVYPKSAAGCLAKLDKTSSYFVVSWSRDKTIRVWSSRGDPLLILRGHDNWVRGVVLHPAGRYLVSVSDDKTMRCWDLEQGGRCIRVVDAHGHFVTCVAWAPNDVNGRVRCLVATGGVDGQVKVWQ</sequence>
<keyword id="KW-0131">Cell cycle</keyword>
<keyword id="KW-0132">Cell division</keyword>
<keyword id="KW-0175">Coiled coil</keyword>
<keyword id="KW-0963">Cytoplasm</keyword>
<keyword id="KW-0206">Cytoskeleton</keyword>
<keyword id="KW-0493">Microtubule</keyword>
<keyword id="KW-0498">Mitosis</keyword>
<keyword id="KW-1185">Reference proteome</keyword>
<keyword id="KW-0677">Repeat</keyword>
<keyword id="KW-0813">Transport</keyword>
<keyword id="KW-0853">WD repeat</keyword>
<comment type="function">
    <text evidence="1">Positively regulates the activity of the minus-end directed microtubule motor protein dynein. Plays a central role in positioning the mitotic spindle at the bud neck during cell division. Targets cytoplasmic dynein to microtubule plus ends, thereby promoting dynein-mediated microtubule sliding along the bud cortex and consequently the movement of the mitotic spindle to the bud neck.</text>
</comment>
<comment type="subunit">
    <text evidence="1">Self-associates. Interacts with NDL1 and dynein.</text>
</comment>
<comment type="subcellular location">
    <subcellularLocation>
        <location>Cytoplasm</location>
        <location>Cytoskeleton</location>
    </subcellularLocation>
    <subcellularLocation>
        <location evidence="1">Cytoplasm</location>
        <location evidence="1">Cytoskeleton</location>
        <location evidence="1">Spindle pole</location>
    </subcellularLocation>
    <text evidence="1">Localizes to the plus ends of microtubules and the mitotic spindle poles.</text>
</comment>
<comment type="similarity">
    <text evidence="1">Belongs to the WD repeat LIS1/nudF family.</text>
</comment>